<reference key="1">
    <citation type="journal article" date="2002" name="Proc. Natl. Acad. Sci. U.S.A.">
        <title>The genome sequence of the facultative intracellular pathogen Brucella melitensis.</title>
        <authorList>
            <person name="DelVecchio V.G."/>
            <person name="Kapatral V."/>
            <person name="Redkar R.J."/>
            <person name="Patra G."/>
            <person name="Mujer C."/>
            <person name="Los T."/>
            <person name="Ivanova N."/>
            <person name="Anderson I."/>
            <person name="Bhattacharyya A."/>
            <person name="Lykidis A."/>
            <person name="Reznik G."/>
            <person name="Jablonski L."/>
            <person name="Larsen N."/>
            <person name="D'Souza M."/>
            <person name="Bernal A."/>
            <person name="Mazur M."/>
            <person name="Goltsman E."/>
            <person name="Selkov E."/>
            <person name="Elzer P.H."/>
            <person name="Hagius S."/>
            <person name="O'Callaghan D."/>
            <person name="Letesson J.-J."/>
            <person name="Haselkorn R."/>
            <person name="Kyrpides N.C."/>
            <person name="Overbeek R."/>
        </authorList>
    </citation>
    <scope>NUCLEOTIDE SEQUENCE [LARGE SCALE GENOMIC DNA]</scope>
    <source>
        <strain>ATCC 23456 / CCUG 17765 / NCTC 10094 / 16M</strain>
    </source>
</reference>
<comment type="function">
    <text evidence="1">Catalyzes the addition of meso-diaminopimelic acid to the nucleotide precursor UDP-N-acetylmuramoyl-L-alanyl-D-glutamate (UMAG) in the biosynthesis of bacterial cell-wall peptidoglycan.</text>
</comment>
<comment type="catalytic activity">
    <reaction evidence="1">
        <text>UDP-N-acetyl-alpha-D-muramoyl-L-alanyl-D-glutamate + meso-2,6-diaminopimelate + ATP = UDP-N-acetyl-alpha-D-muramoyl-L-alanyl-gamma-D-glutamyl-meso-2,6-diaminopimelate + ADP + phosphate + H(+)</text>
        <dbReference type="Rhea" id="RHEA:23676"/>
        <dbReference type="ChEBI" id="CHEBI:15378"/>
        <dbReference type="ChEBI" id="CHEBI:30616"/>
        <dbReference type="ChEBI" id="CHEBI:43474"/>
        <dbReference type="ChEBI" id="CHEBI:57791"/>
        <dbReference type="ChEBI" id="CHEBI:83900"/>
        <dbReference type="ChEBI" id="CHEBI:83905"/>
        <dbReference type="ChEBI" id="CHEBI:456216"/>
        <dbReference type="EC" id="6.3.2.13"/>
    </reaction>
</comment>
<comment type="cofactor">
    <cofactor evidence="1">
        <name>Mg(2+)</name>
        <dbReference type="ChEBI" id="CHEBI:18420"/>
    </cofactor>
</comment>
<comment type="pathway">
    <text evidence="1">Cell wall biogenesis; peptidoglycan biosynthesis.</text>
</comment>
<comment type="subcellular location">
    <subcellularLocation>
        <location evidence="1">Cytoplasm</location>
    </subcellularLocation>
</comment>
<comment type="PTM">
    <text evidence="1">Carboxylation is probably crucial for Mg(2+) binding and, consequently, for the gamma-phosphate positioning of ATP.</text>
</comment>
<comment type="similarity">
    <text evidence="1">Belongs to the MurCDEF family. MurE subfamily.</text>
</comment>
<comment type="sequence caution" evidence="2">
    <conflict type="erroneous initiation">
        <sequence resource="EMBL-CDS" id="AAL51755"/>
    </conflict>
</comment>
<protein>
    <recommendedName>
        <fullName evidence="1">UDP-N-acetylmuramoyl-L-alanyl-D-glutamate--2,6-diaminopimelate ligase</fullName>
        <ecNumber evidence="1">6.3.2.13</ecNumber>
    </recommendedName>
    <alternativeName>
        <fullName evidence="1">Meso-A2pm-adding enzyme</fullName>
    </alternativeName>
    <alternativeName>
        <fullName evidence="1">Meso-diaminopimelate-adding enzyme</fullName>
    </alternativeName>
    <alternativeName>
        <fullName evidence="1">UDP-MurNAc-L-Ala-D-Glu:meso-diaminopimelate ligase</fullName>
    </alternativeName>
    <alternativeName>
        <fullName evidence="1">UDP-MurNAc-tripeptide synthetase</fullName>
    </alternativeName>
    <alternativeName>
        <fullName evidence="1">UDP-N-acetylmuramyl-tripeptide synthetase</fullName>
    </alternativeName>
</protein>
<feature type="chain" id="PRO_0000101871" description="UDP-N-acetylmuramoyl-L-alanyl-D-glutamate--2,6-diaminopimelate ligase">
    <location>
        <begin position="1"/>
        <end position="488"/>
    </location>
</feature>
<feature type="short sequence motif" description="Meso-diaminopimelate recognition motif">
    <location>
        <begin position="405"/>
        <end position="408"/>
    </location>
</feature>
<feature type="binding site" evidence="1">
    <location>
        <position position="29"/>
    </location>
    <ligand>
        <name>UDP-N-acetyl-alpha-D-muramoyl-L-alanyl-D-glutamate</name>
        <dbReference type="ChEBI" id="CHEBI:83900"/>
    </ligand>
</feature>
<feature type="binding site" evidence="1">
    <location>
        <begin position="108"/>
        <end position="114"/>
    </location>
    <ligand>
        <name>ATP</name>
        <dbReference type="ChEBI" id="CHEBI:30616"/>
    </ligand>
</feature>
<feature type="binding site" evidence="1">
    <location>
        <begin position="150"/>
        <end position="151"/>
    </location>
    <ligand>
        <name>UDP-N-acetyl-alpha-D-muramoyl-L-alanyl-D-glutamate</name>
        <dbReference type="ChEBI" id="CHEBI:83900"/>
    </ligand>
</feature>
<feature type="binding site" evidence="1">
    <location>
        <position position="177"/>
    </location>
    <ligand>
        <name>UDP-N-acetyl-alpha-D-muramoyl-L-alanyl-D-glutamate</name>
        <dbReference type="ChEBI" id="CHEBI:83900"/>
    </ligand>
</feature>
<feature type="binding site" evidence="1">
    <location>
        <position position="183"/>
    </location>
    <ligand>
        <name>UDP-N-acetyl-alpha-D-muramoyl-L-alanyl-D-glutamate</name>
        <dbReference type="ChEBI" id="CHEBI:83900"/>
    </ligand>
</feature>
<feature type="binding site" evidence="1">
    <location>
        <position position="185"/>
    </location>
    <ligand>
        <name>UDP-N-acetyl-alpha-D-muramoyl-L-alanyl-D-glutamate</name>
        <dbReference type="ChEBI" id="CHEBI:83900"/>
    </ligand>
</feature>
<feature type="binding site" evidence="1">
    <location>
        <position position="381"/>
    </location>
    <ligand>
        <name>meso-2,6-diaminopimelate</name>
        <dbReference type="ChEBI" id="CHEBI:57791"/>
    </ligand>
</feature>
<feature type="binding site" evidence="1">
    <location>
        <begin position="405"/>
        <end position="408"/>
    </location>
    <ligand>
        <name>meso-2,6-diaminopimelate</name>
        <dbReference type="ChEBI" id="CHEBI:57791"/>
    </ligand>
</feature>
<feature type="binding site" evidence="1">
    <location>
        <position position="453"/>
    </location>
    <ligand>
        <name>meso-2,6-diaminopimelate</name>
        <dbReference type="ChEBI" id="CHEBI:57791"/>
    </ligand>
</feature>
<feature type="binding site" evidence="1">
    <location>
        <position position="457"/>
    </location>
    <ligand>
        <name>meso-2,6-diaminopimelate</name>
        <dbReference type="ChEBI" id="CHEBI:57791"/>
    </ligand>
</feature>
<feature type="modified residue" description="N6-carboxylysine" evidence="1">
    <location>
        <position position="217"/>
    </location>
</feature>
<sequence length="488" mass="51344">MKLKEIALFNELAPGEAGEVEITGITSDSRAVQRGFLFAALKGVKADGAVFAADAAKRGAVAIIAGKDTAIADAGVPVLHVDDPRHVLAIAAAQFYGKQPEVMVAVTGTSGKTSVASFTRQIWAYAGFPAANIGTTGVFSPTRSDYNSLTTPDPVELHRVLAELASEGVTHAAMEASSHGLDQRRLDGVRLAAGAFTNLGRDHMDYHATIDEYLGAKMRLFNALLPKGAPAIIFADDQFSAQAIEAATLAGCDVKTVGRKGNFIALKRVEHERFRQHVEVRIGEEIFEIELPLAGDFQVANALVAAGLAMVTGVPAAAAMRALALLKGAPGRLDLVGATEDGAPAYVDYAHKPEALENVLTSVRPFTTGRVIVVFGCGGDRDKGKRPIMGEIASRLADVVIVTDDNPRSEVPAQIRSEIMAAATGATEIGDRREAIFTAVSMMQPGDTLVVAGKGHEEGQIVGNITLPFSDHAEVAAALAARLEEHLK</sequence>
<accession>Q8YI71</accession>
<gene>
    <name evidence="1" type="primary">murE</name>
    <name type="ordered locus">BMEI0574</name>
</gene>
<keyword id="KW-0067">ATP-binding</keyword>
<keyword id="KW-0131">Cell cycle</keyword>
<keyword id="KW-0132">Cell division</keyword>
<keyword id="KW-0133">Cell shape</keyword>
<keyword id="KW-0961">Cell wall biogenesis/degradation</keyword>
<keyword id="KW-0963">Cytoplasm</keyword>
<keyword id="KW-0436">Ligase</keyword>
<keyword id="KW-0460">Magnesium</keyword>
<keyword id="KW-0547">Nucleotide-binding</keyword>
<keyword id="KW-0573">Peptidoglycan synthesis</keyword>
<proteinExistence type="inferred from homology"/>
<organism>
    <name type="scientific">Brucella melitensis biotype 1 (strain ATCC 23456 / CCUG 17765 / NCTC 10094 / 16M)</name>
    <dbReference type="NCBI Taxonomy" id="224914"/>
    <lineage>
        <taxon>Bacteria</taxon>
        <taxon>Pseudomonadati</taxon>
        <taxon>Pseudomonadota</taxon>
        <taxon>Alphaproteobacteria</taxon>
        <taxon>Hyphomicrobiales</taxon>
        <taxon>Brucellaceae</taxon>
        <taxon>Brucella/Ochrobactrum group</taxon>
        <taxon>Brucella</taxon>
    </lineage>
</organism>
<name>MURE_BRUME</name>
<evidence type="ECO:0000255" key="1">
    <source>
        <dbReference type="HAMAP-Rule" id="MF_00208"/>
    </source>
</evidence>
<evidence type="ECO:0000305" key="2"/>
<dbReference type="EC" id="6.3.2.13" evidence="1"/>
<dbReference type="EMBL" id="AE008917">
    <property type="protein sequence ID" value="AAL51755.1"/>
    <property type="status" value="ALT_INIT"/>
    <property type="molecule type" value="Genomic_DNA"/>
</dbReference>
<dbReference type="PIR" id="AH3323">
    <property type="entry name" value="AH3323"/>
</dbReference>
<dbReference type="SMR" id="Q8YI71"/>
<dbReference type="KEGG" id="bme:BMEI0574"/>
<dbReference type="KEGG" id="bmel:DK63_852"/>
<dbReference type="PATRIC" id="fig|224914.52.peg.895"/>
<dbReference type="eggNOG" id="COG0769">
    <property type="taxonomic scope" value="Bacteria"/>
</dbReference>
<dbReference type="UniPathway" id="UPA00219"/>
<dbReference type="Proteomes" id="UP000000419">
    <property type="component" value="Chromosome I"/>
</dbReference>
<dbReference type="GO" id="GO:0005737">
    <property type="term" value="C:cytoplasm"/>
    <property type="evidence" value="ECO:0007669"/>
    <property type="project" value="UniProtKB-SubCell"/>
</dbReference>
<dbReference type="GO" id="GO:0005524">
    <property type="term" value="F:ATP binding"/>
    <property type="evidence" value="ECO:0007669"/>
    <property type="project" value="UniProtKB-UniRule"/>
</dbReference>
<dbReference type="GO" id="GO:0000287">
    <property type="term" value="F:magnesium ion binding"/>
    <property type="evidence" value="ECO:0007669"/>
    <property type="project" value="UniProtKB-UniRule"/>
</dbReference>
<dbReference type="GO" id="GO:0008765">
    <property type="term" value="F:UDP-N-acetylmuramoylalanyl-D-glutamate-2,6-diaminopimelate ligase activity"/>
    <property type="evidence" value="ECO:0007669"/>
    <property type="project" value="UniProtKB-UniRule"/>
</dbReference>
<dbReference type="GO" id="GO:0051301">
    <property type="term" value="P:cell division"/>
    <property type="evidence" value="ECO:0007669"/>
    <property type="project" value="UniProtKB-KW"/>
</dbReference>
<dbReference type="GO" id="GO:0071555">
    <property type="term" value="P:cell wall organization"/>
    <property type="evidence" value="ECO:0007669"/>
    <property type="project" value="UniProtKB-KW"/>
</dbReference>
<dbReference type="GO" id="GO:0009252">
    <property type="term" value="P:peptidoglycan biosynthetic process"/>
    <property type="evidence" value="ECO:0007669"/>
    <property type="project" value="UniProtKB-UniRule"/>
</dbReference>
<dbReference type="GO" id="GO:0008360">
    <property type="term" value="P:regulation of cell shape"/>
    <property type="evidence" value="ECO:0007669"/>
    <property type="project" value="UniProtKB-KW"/>
</dbReference>
<dbReference type="Gene3D" id="3.90.190.20">
    <property type="entry name" value="Mur ligase, C-terminal domain"/>
    <property type="match status" value="1"/>
</dbReference>
<dbReference type="Gene3D" id="3.40.1190.10">
    <property type="entry name" value="Mur-like, catalytic domain"/>
    <property type="match status" value="1"/>
</dbReference>
<dbReference type="Gene3D" id="3.40.1390.10">
    <property type="entry name" value="MurE/MurF, N-terminal domain"/>
    <property type="match status" value="1"/>
</dbReference>
<dbReference type="HAMAP" id="MF_00208">
    <property type="entry name" value="MurE"/>
    <property type="match status" value="1"/>
</dbReference>
<dbReference type="InterPro" id="IPR036565">
    <property type="entry name" value="Mur-like_cat_sf"/>
</dbReference>
<dbReference type="InterPro" id="IPR004101">
    <property type="entry name" value="Mur_ligase_C"/>
</dbReference>
<dbReference type="InterPro" id="IPR036615">
    <property type="entry name" value="Mur_ligase_C_dom_sf"/>
</dbReference>
<dbReference type="InterPro" id="IPR013221">
    <property type="entry name" value="Mur_ligase_cen"/>
</dbReference>
<dbReference type="InterPro" id="IPR000713">
    <property type="entry name" value="Mur_ligase_N"/>
</dbReference>
<dbReference type="InterPro" id="IPR035911">
    <property type="entry name" value="MurE/MurF_N"/>
</dbReference>
<dbReference type="InterPro" id="IPR005761">
    <property type="entry name" value="UDP-N-AcMur-Glu-dNH2Pim_ligase"/>
</dbReference>
<dbReference type="NCBIfam" id="TIGR01085">
    <property type="entry name" value="murE"/>
    <property type="match status" value="1"/>
</dbReference>
<dbReference type="NCBIfam" id="NF001124">
    <property type="entry name" value="PRK00139.1-2"/>
    <property type="match status" value="1"/>
</dbReference>
<dbReference type="NCBIfam" id="NF001126">
    <property type="entry name" value="PRK00139.1-4"/>
    <property type="match status" value="1"/>
</dbReference>
<dbReference type="PANTHER" id="PTHR23135">
    <property type="entry name" value="MUR LIGASE FAMILY MEMBER"/>
    <property type="match status" value="1"/>
</dbReference>
<dbReference type="PANTHER" id="PTHR23135:SF4">
    <property type="entry name" value="UDP-N-ACETYLMURAMOYL-L-ALANYL-D-GLUTAMATE--2,6-DIAMINOPIMELATE LIGASE MURE HOMOLOG, CHLOROPLASTIC"/>
    <property type="match status" value="1"/>
</dbReference>
<dbReference type="Pfam" id="PF01225">
    <property type="entry name" value="Mur_ligase"/>
    <property type="match status" value="1"/>
</dbReference>
<dbReference type="Pfam" id="PF02875">
    <property type="entry name" value="Mur_ligase_C"/>
    <property type="match status" value="1"/>
</dbReference>
<dbReference type="Pfam" id="PF08245">
    <property type="entry name" value="Mur_ligase_M"/>
    <property type="match status" value="1"/>
</dbReference>
<dbReference type="SUPFAM" id="SSF53623">
    <property type="entry name" value="MurD-like peptide ligases, catalytic domain"/>
    <property type="match status" value="1"/>
</dbReference>
<dbReference type="SUPFAM" id="SSF53244">
    <property type="entry name" value="MurD-like peptide ligases, peptide-binding domain"/>
    <property type="match status" value="1"/>
</dbReference>
<dbReference type="SUPFAM" id="SSF63418">
    <property type="entry name" value="MurE/MurF N-terminal domain"/>
    <property type="match status" value="1"/>
</dbReference>